<gene>
    <name type="primary">WNT7A</name>
</gene>
<proteinExistence type="inferred from homology"/>
<protein>
    <recommendedName>
        <fullName>Protein Wnt-7a</fullName>
    </recommendedName>
</protein>
<evidence type="ECO:0000250" key="1">
    <source>
        <dbReference type="UniProtKB" id="O00755"/>
    </source>
</evidence>
<evidence type="ECO:0000250" key="2">
    <source>
        <dbReference type="UniProtKB" id="P24383"/>
    </source>
</evidence>
<evidence type="ECO:0000250" key="3">
    <source>
        <dbReference type="UniProtKB" id="P27467"/>
    </source>
</evidence>
<evidence type="ECO:0000250" key="4">
    <source>
        <dbReference type="UniProtKB" id="P28026"/>
    </source>
</evidence>
<evidence type="ECO:0000250" key="5">
    <source>
        <dbReference type="UniProtKB" id="P56704"/>
    </source>
</evidence>
<evidence type="ECO:0000255" key="6"/>
<evidence type="ECO:0000305" key="7"/>
<accession>Q1KYK6</accession>
<reference key="1">
    <citation type="submission" date="2006-01" db="EMBL/GenBank/DDBJ databases">
        <title>WNT7A and limb development.</title>
        <authorList>
            <person name="Stern R."/>
            <person name="Cox J."/>
            <person name="Nicholas A."/>
            <person name="Al-Gazali L."/>
            <person name="Woods G."/>
        </authorList>
    </citation>
    <scope>NUCLEOTIDE SEQUENCE [GENOMIC DNA]</scope>
</reference>
<feature type="signal peptide" evidence="6">
    <location>
        <begin position="1"/>
        <end position="31"/>
    </location>
</feature>
<feature type="chain" id="PRO_0000245333" description="Protein Wnt-7a">
    <location>
        <begin position="32"/>
        <end position="349"/>
    </location>
</feature>
<feature type="region of interest" description="Disordered linker" evidence="1">
    <location>
        <begin position="238"/>
        <end position="266"/>
    </location>
</feature>
<feature type="lipid moiety-binding region" description="O-palmitoleoyl serine; by PORCN" evidence="5">
    <location>
        <position position="206"/>
    </location>
</feature>
<feature type="glycosylation site" description="N-linked (GlcNAc...) asparagine" evidence="6">
    <location>
        <position position="83"/>
    </location>
</feature>
<feature type="glycosylation site" description="N-linked (GlcNAc...) asparagine" evidence="6">
    <location>
        <position position="127"/>
    </location>
</feature>
<feature type="glycosylation site" description="N-linked (GlcNAc...) asparagine" evidence="6">
    <location>
        <position position="295"/>
    </location>
</feature>
<feature type="disulfide bond" evidence="4">
    <location>
        <begin position="73"/>
        <end position="84"/>
    </location>
</feature>
<feature type="disulfide bond" evidence="4">
    <location>
        <begin position="123"/>
        <end position="131"/>
    </location>
</feature>
<feature type="disulfide bond" evidence="4">
    <location>
        <begin position="133"/>
        <end position="152"/>
    </location>
</feature>
<feature type="disulfide bond" evidence="4">
    <location>
        <begin position="200"/>
        <end position="214"/>
    </location>
</feature>
<feature type="disulfide bond" evidence="4">
    <location>
        <begin position="202"/>
        <end position="209"/>
    </location>
</feature>
<feature type="disulfide bond" evidence="4">
    <location>
        <begin position="278"/>
        <end position="309"/>
    </location>
</feature>
<feature type="disulfide bond" evidence="4">
    <location>
        <begin position="294"/>
        <end position="304"/>
    </location>
</feature>
<feature type="disulfide bond" evidence="4">
    <location>
        <begin position="308"/>
        <end position="348"/>
    </location>
</feature>
<feature type="disulfide bond" evidence="4">
    <location>
        <begin position="324"/>
        <end position="339"/>
    </location>
</feature>
<feature type="disulfide bond" evidence="4">
    <location>
        <begin position="326"/>
        <end position="336"/>
    </location>
</feature>
<feature type="disulfide bond" evidence="4">
    <location>
        <begin position="331"/>
        <end position="332"/>
    </location>
</feature>
<name>WNT7A_CALJA</name>
<dbReference type="EMBL" id="DQ367075">
    <property type="protein sequence ID" value="ABE73777.1"/>
    <property type="molecule type" value="Genomic_DNA"/>
</dbReference>
<dbReference type="RefSeq" id="XP_002758695.1">
    <property type="nucleotide sequence ID" value="XM_002758649.5"/>
</dbReference>
<dbReference type="SMR" id="Q1KYK6"/>
<dbReference type="FunCoup" id="Q1KYK6">
    <property type="interactions" value="495"/>
</dbReference>
<dbReference type="STRING" id="9483.ENSCJAP00000031115"/>
<dbReference type="GlyCosmos" id="Q1KYK6">
    <property type="glycosylation" value="3 sites, No reported glycans"/>
</dbReference>
<dbReference type="Ensembl" id="ENSCJAT00000032881.4">
    <property type="protein sequence ID" value="ENSCJAP00000031115.3"/>
    <property type="gene ID" value="ENSCJAG00000040771.3"/>
</dbReference>
<dbReference type="GeneID" id="100387909"/>
<dbReference type="KEGG" id="cjc:100387909"/>
<dbReference type="CTD" id="7476"/>
<dbReference type="eggNOG" id="KOG3913">
    <property type="taxonomic scope" value="Eukaryota"/>
</dbReference>
<dbReference type="GeneTree" id="ENSGT00940000158523"/>
<dbReference type="HOGENOM" id="CLU_033039_1_4_1"/>
<dbReference type="InParanoid" id="Q1KYK6"/>
<dbReference type="OMA" id="QGYNDQE"/>
<dbReference type="OrthoDB" id="5945655at2759"/>
<dbReference type="TreeFam" id="TF105310"/>
<dbReference type="Proteomes" id="UP000008225">
    <property type="component" value="Chromosome 15"/>
</dbReference>
<dbReference type="Bgee" id="ENSCJAG00000040771">
    <property type="expression patterns" value="Expressed in frontal cortex and 1 other cell type or tissue"/>
</dbReference>
<dbReference type="GO" id="GO:0009986">
    <property type="term" value="C:cell surface"/>
    <property type="evidence" value="ECO:0007669"/>
    <property type="project" value="Ensembl"/>
</dbReference>
<dbReference type="GO" id="GO:0031012">
    <property type="term" value="C:extracellular matrix"/>
    <property type="evidence" value="ECO:0007669"/>
    <property type="project" value="Ensembl"/>
</dbReference>
<dbReference type="GO" id="GO:0005615">
    <property type="term" value="C:extracellular space"/>
    <property type="evidence" value="ECO:0007669"/>
    <property type="project" value="TreeGrafter"/>
</dbReference>
<dbReference type="GO" id="GO:0098978">
    <property type="term" value="C:glutamatergic synapse"/>
    <property type="evidence" value="ECO:0007669"/>
    <property type="project" value="Ensembl"/>
</dbReference>
<dbReference type="GO" id="GO:0098793">
    <property type="term" value="C:presynapse"/>
    <property type="evidence" value="ECO:0007669"/>
    <property type="project" value="GOC"/>
</dbReference>
<dbReference type="GO" id="GO:0098685">
    <property type="term" value="C:Schaffer collateral - CA1 synapse"/>
    <property type="evidence" value="ECO:0007669"/>
    <property type="project" value="Ensembl"/>
</dbReference>
<dbReference type="GO" id="GO:0005125">
    <property type="term" value="F:cytokine activity"/>
    <property type="evidence" value="ECO:0007669"/>
    <property type="project" value="Ensembl"/>
</dbReference>
<dbReference type="GO" id="GO:0005109">
    <property type="term" value="F:frizzled binding"/>
    <property type="evidence" value="ECO:0007669"/>
    <property type="project" value="Ensembl"/>
</dbReference>
<dbReference type="GO" id="GO:0001525">
    <property type="term" value="P:angiogenesis"/>
    <property type="evidence" value="ECO:0007669"/>
    <property type="project" value="Ensembl"/>
</dbReference>
<dbReference type="GO" id="GO:0006915">
    <property type="term" value="P:apoptotic process"/>
    <property type="evidence" value="ECO:0007669"/>
    <property type="project" value="Ensembl"/>
</dbReference>
<dbReference type="GO" id="GO:0045167">
    <property type="term" value="P:asymmetric protein localization involved in cell fate determination"/>
    <property type="evidence" value="ECO:0007669"/>
    <property type="project" value="Ensembl"/>
</dbReference>
<dbReference type="GO" id="GO:0060070">
    <property type="term" value="P:canonical Wnt signaling pathway"/>
    <property type="evidence" value="ECO:0007669"/>
    <property type="project" value="Ensembl"/>
</dbReference>
<dbReference type="GO" id="GO:0001502">
    <property type="term" value="P:cartilage condensation"/>
    <property type="evidence" value="ECO:0007669"/>
    <property type="project" value="Ensembl"/>
</dbReference>
<dbReference type="GO" id="GO:0021846">
    <property type="term" value="P:cell proliferation in forebrain"/>
    <property type="evidence" value="ECO:0007669"/>
    <property type="project" value="Ensembl"/>
</dbReference>
<dbReference type="GO" id="GO:0071560">
    <property type="term" value="P:cellular response to transforming growth factor beta stimulus"/>
    <property type="evidence" value="ECO:0007669"/>
    <property type="project" value="Ensembl"/>
</dbReference>
<dbReference type="GO" id="GO:0022009">
    <property type="term" value="P:central nervous system vasculogenesis"/>
    <property type="evidence" value="ECO:0007669"/>
    <property type="project" value="Ensembl"/>
</dbReference>
<dbReference type="GO" id="GO:0021707">
    <property type="term" value="P:cerebellar granule cell differentiation"/>
    <property type="evidence" value="ECO:0007669"/>
    <property type="project" value="Ensembl"/>
</dbReference>
<dbReference type="GO" id="GO:0002062">
    <property type="term" value="P:chondrocyte differentiation"/>
    <property type="evidence" value="ECO:0007669"/>
    <property type="project" value="Ensembl"/>
</dbReference>
<dbReference type="GO" id="GO:0060997">
    <property type="term" value="P:dendritic spine morphogenesis"/>
    <property type="evidence" value="ECO:0007669"/>
    <property type="project" value="Ensembl"/>
</dbReference>
<dbReference type="GO" id="GO:0009953">
    <property type="term" value="P:dorsal/ventral pattern formation"/>
    <property type="evidence" value="ECO:0007669"/>
    <property type="project" value="Ensembl"/>
</dbReference>
<dbReference type="GO" id="GO:0000578">
    <property type="term" value="P:embryonic axis specification"/>
    <property type="evidence" value="ECO:0007669"/>
    <property type="project" value="Ensembl"/>
</dbReference>
<dbReference type="GO" id="GO:0042733">
    <property type="term" value="P:embryonic digit morphogenesis"/>
    <property type="evidence" value="ECO:0007669"/>
    <property type="project" value="Ensembl"/>
</dbReference>
<dbReference type="GO" id="GO:0035115">
    <property type="term" value="P:embryonic forelimb morphogenesis"/>
    <property type="evidence" value="ECO:0007669"/>
    <property type="project" value="Ensembl"/>
</dbReference>
<dbReference type="GO" id="GO:0035116">
    <property type="term" value="P:embryonic hindlimb morphogenesis"/>
    <property type="evidence" value="ECO:0007669"/>
    <property type="project" value="Ensembl"/>
</dbReference>
<dbReference type="GO" id="GO:0060856">
    <property type="term" value="P:establishment of blood-brain barrier"/>
    <property type="evidence" value="ECO:0007669"/>
    <property type="project" value="Ensembl"/>
</dbReference>
<dbReference type="GO" id="GO:0030010">
    <property type="term" value="P:establishment of cell polarity"/>
    <property type="evidence" value="ECO:0007669"/>
    <property type="project" value="Ensembl"/>
</dbReference>
<dbReference type="GO" id="GO:0043066">
    <property type="term" value="P:negative regulation of apoptotic process"/>
    <property type="evidence" value="ECO:0007669"/>
    <property type="project" value="Ensembl"/>
</dbReference>
<dbReference type="GO" id="GO:0050768">
    <property type="term" value="P:negative regulation of neurogenesis"/>
    <property type="evidence" value="ECO:0007669"/>
    <property type="project" value="Ensembl"/>
</dbReference>
<dbReference type="GO" id="GO:0007269">
    <property type="term" value="P:neurotransmitter secretion"/>
    <property type="evidence" value="ECO:0007669"/>
    <property type="project" value="Ensembl"/>
</dbReference>
<dbReference type="GO" id="GO:0060066">
    <property type="term" value="P:oviduct development"/>
    <property type="evidence" value="ECO:0007669"/>
    <property type="project" value="Ensembl"/>
</dbReference>
<dbReference type="GO" id="GO:0010595">
    <property type="term" value="P:positive regulation of endothelial cell migration"/>
    <property type="evidence" value="ECO:0007669"/>
    <property type="project" value="Ensembl"/>
</dbReference>
<dbReference type="GO" id="GO:0060054">
    <property type="term" value="P:positive regulation of epithelial cell proliferation involved in wound healing"/>
    <property type="evidence" value="ECO:0007669"/>
    <property type="project" value="Ensembl"/>
</dbReference>
<dbReference type="GO" id="GO:2000463">
    <property type="term" value="P:positive regulation of excitatory postsynaptic potential"/>
    <property type="evidence" value="ECO:0007669"/>
    <property type="project" value="Ensembl"/>
</dbReference>
<dbReference type="GO" id="GO:1904891">
    <property type="term" value="P:positive regulation of excitatory synapse assembly"/>
    <property type="evidence" value="ECO:0007669"/>
    <property type="project" value="Ensembl"/>
</dbReference>
<dbReference type="GO" id="GO:0010628">
    <property type="term" value="P:positive regulation of gene expression"/>
    <property type="evidence" value="ECO:0007669"/>
    <property type="project" value="Ensembl"/>
</dbReference>
<dbReference type="GO" id="GO:0046330">
    <property type="term" value="P:positive regulation of JNK cascade"/>
    <property type="evidence" value="ECO:0007669"/>
    <property type="project" value="TreeGrafter"/>
</dbReference>
<dbReference type="GO" id="GO:0051247">
    <property type="term" value="P:positive regulation of protein metabolic process"/>
    <property type="evidence" value="ECO:0007669"/>
    <property type="project" value="Ensembl"/>
</dbReference>
<dbReference type="GO" id="GO:0045944">
    <property type="term" value="P:positive regulation of transcription by RNA polymerase II"/>
    <property type="evidence" value="ECO:0007669"/>
    <property type="project" value="Ensembl"/>
</dbReference>
<dbReference type="GO" id="GO:0031133">
    <property type="term" value="P:regulation of axon diameter"/>
    <property type="evidence" value="ECO:0007669"/>
    <property type="project" value="Ensembl"/>
</dbReference>
<dbReference type="GO" id="GO:0099175">
    <property type="term" value="P:regulation of postsynapse organization"/>
    <property type="evidence" value="ECO:0007669"/>
    <property type="project" value="Ensembl"/>
</dbReference>
<dbReference type="GO" id="GO:1905606">
    <property type="term" value="P:regulation of presynapse assembly"/>
    <property type="evidence" value="ECO:0007669"/>
    <property type="project" value="Ensembl"/>
</dbReference>
<dbReference type="GO" id="GO:2000300">
    <property type="term" value="P:regulation of synaptic vesicle exocytosis"/>
    <property type="evidence" value="ECO:0007669"/>
    <property type="project" value="Ensembl"/>
</dbReference>
<dbReference type="GO" id="GO:0043627">
    <property type="term" value="P:response to estrogen"/>
    <property type="evidence" value="ECO:0007669"/>
    <property type="project" value="Ensembl"/>
</dbReference>
<dbReference type="GO" id="GO:0062009">
    <property type="term" value="P:secondary palate development"/>
    <property type="evidence" value="ECO:0007669"/>
    <property type="project" value="Ensembl"/>
</dbReference>
<dbReference type="GO" id="GO:0014719">
    <property type="term" value="P:skeletal muscle satellite cell activation"/>
    <property type="evidence" value="ECO:0007669"/>
    <property type="project" value="Ensembl"/>
</dbReference>
<dbReference type="GO" id="GO:0014834">
    <property type="term" value="P:skeletal muscle satellite cell maintenance involved in skeletal muscle regeneration"/>
    <property type="evidence" value="ECO:0007669"/>
    <property type="project" value="Ensembl"/>
</dbReference>
<dbReference type="GO" id="GO:0048103">
    <property type="term" value="P:somatic stem cell division"/>
    <property type="evidence" value="ECO:0007669"/>
    <property type="project" value="Ensembl"/>
</dbReference>
<dbReference type="GO" id="GO:0035019">
    <property type="term" value="P:somatic stem cell population maintenance"/>
    <property type="evidence" value="ECO:0007669"/>
    <property type="project" value="Ensembl"/>
</dbReference>
<dbReference type="GO" id="GO:0048864">
    <property type="term" value="P:stem cell development"/>
    <property type="evidence" value="ECO:0007669"/>
    <property type="project" value="Ensembl"/>
</dbReference>
<dbReference type="GO" id="GO:0007416">
    <property type="term" value="P:synapse assembly"/>
    <property type="evidence" value="ECO:0007669"/>
    <property type="project" value="Ensembl"/>
</dbReference>
<dbReference type="GO" id="GO:0061038">
    <property type="term" value="P:uterus morphogenesis"/>
    <property type="evidence" value="ECO:0007669"/>
    <property type="project" value="Ensembl"/>
</dbReference>
<dbReference type="GO" id="GO:0060071">
    <property type="term" value="P:Wnt signaling pathway, planar cell polarity pathway"/>
    <property type="evidence" value="ECO:0007669"/>
    <property type="project" value="Ensembl"/>
</dbReference>
<dbReference type="GO" id="GO:0035313">
    <property type="term" value="P:wound healing, spreading of epidermal cells"/>
    <property type="evidence" value="ECO:0007669"/>
    <property type="project" value="Ensembl"/>
</dbReference>
<dbReference type="CDD" id="cd19349">
    <property type="entry name" value="Wnt_Wnt7a"/>
    <property type="match status" value="1"/>
</dbReference>
<dbReference type="FunFam" id="3.30.2460.20:FF:000001">
    <property type="entry name" value="Wnt homolog"/>
    <property type="match status" value="1"/>
</dbReference>
<dbReference type="Gene3D" id="3.30.2460.20">
    <property type="match status" value="1"/>
</dbReference>
<dbReference type="InterPro" id="IPR005817">
    <property type="entry name" value="Wnt"/>
</dbReference>
<dbReference type="InterPro" id="IPR013300">
    <property type="entry name" value="Wnt7"/>
</dbReference>
<dbReference type="InterPro" id="IPR043158">
    <property type="entry name" value="Wnt_C"/>
</dbReference>
<dbReference type="InterPro" id="IPR018161">
    <property type="entry name" value="Wnt_CS"/>
</dbReference>
<dbReference type="PANTHER" id="PTHR12027:SF78">
    <property type="entry name" value="PROTEIN WNT-7A"/>
    <property type="match status" value="1"/>
</dbReference>
<dbReference type="PANTHER" id="PTHR12027">
    <property type="entry name" value="WNT RELATED"/>
    <property type="match status" value="1"/>
</dbReference>
<dbReference type="Pfam" id="PF00110">
    <property type="entry name" value="wnt"/>
    <property type="match status" value="1"/>
</dbReference>
<dbReference type="PRINTS" id="PR01891">
    <property type="entry name" value="WNT7PROTEIN"/>
</dbReference>
<dbReference type="PRINTS" id="PR01349">
    <property type="entry name" value="WNTPROTEIN"/>
</dbReference>
<dbReference type="SMART" id="SM00097">
    <property type="entry name" value="WNT1"/>
    <property type="match status" value="1"/>
</dbReference>
<dbReference type="PROSITE" id="PS00246">
    <property type="entry name" value="WNT1"/>
    <property type="match status" value="1"/>
</dbReference>
<organism>
    <name type="scientific">Callithrix jacchus</name>
    <name type="common">White-tufted-ear marmoset</name>
    <dbReference type="NCBI Taxonomy" id="9483"/>
    <lineage>
        <taxon>Eukaryota</taxon>
        <taxon>Metazoa</taxon>
        <taxon>Chordata</taxon>
        <taxon>Craniata</taxon>
        <taxon>Vertebrata</taxon>
        <taxon>Euteleostomi</taxon>
        <taxon>Mammalia</taxon>
        <taxon>Eutheria</taxon>
        <taxon>Euarchontoglires</taxon>
        <taxon>Primates</taxon>
        <taxon>Haplorrhini</taxon>
        <taxon>Platyrrhini</taxon>
        <taxon>Cebidae</taxon>
        <taxon>Callitrichinae</taxon>
        <taxon>Callithrix</taxon>
        <taxon>Callithrix</taxon>
    </lineage>
</organism>
<comment type="function">
    <text evidence="1 2">Ligand for members of the frizzled family of seven transmembrane receptors that functions in the canonical Wnt/beta-catenin signaling pathway (By similarity). Plays an important role in embryonic development, including dorsal versus ventral patterning during limb development, skeleton development and urogenital tract development. Required for central nervous system (CNS) angiogenesis and blood-brain barrier regulation (By similarity). Required for normal, sexually dimorphic development of the Mullerian ducts, and for normal fertility in both sexes. Required for normal neural stem cell proliferation in the hippocampus dentate gyrus. Required for normal progress through the cell cycle in neural progenitor cells, for self-renewal of neural stem cells, and for normal neuronal differentiation and maturation. Promotes formation of synapses via its interaction with FZD5 (By similarity).</text>
</comment>
<comment type="subunit">
    <text evidence="1 2">Forms a soluble 1:1 complex with AFM; this prevents oligomerization and is required for prolonged biological activity. The complex with AFM may represent the physiological form in body fluids (By similarity). Interacts with PORCN (By similarity). Interacts (via intrinsically disordered linker region) with RECK; interaction with RECK confers ligand selectivity for Wnt7 in brain endothelial cells and allows these cells to selectively respond to Wnt7 (By similarity). Interacts with FZD5 (By similarity).</text>
</comment>
<comment type="subcellular location">
    <subcellularLocation>
        <location evidence="2">Secreted</location>
        <location evidence="2">Extracellular space</location>
        <location evidence="2">Extracellular matrix</location>
    </subcellularLocation>
    <subcellularLocation>
        <location evidence="2">Secreted</location>
    </subcellularLocation>
</comment>
<comment type="domain">
    <text evidence="1">The intrinsically disordered linker region is required for recognition by RECK in brain endothelial cells.</text>
</comment>
<comment type="PTM">
    <text evidence="3 5">Palmitoleoylation is required for efficient binding to frizzled receptors. Depalmitoleoylation leads to Wnt signaling pathway inhibition.</text>
</comment>
<comment type="similarity">
    <text evidence="7">Belongs to the Wnt family.</text>
</comment>
<keyword id="KW-0217">Developmental protein</keyword>
<keyword id="KW-1015">Disulfide bond</keyword>
<keyword id="KW-0272">Extracellular matrix</keyword>
<keyword id="KW-0325">Glycoprotein</keyword>
<keyword id="KW-0449">Lipoprotein</keyword>
<keyword id="KW-1185">Reference proteome</keyword>
<keyword id="KW-0964">Secreted</keyword>
<keyword id="KW-0732">Signal</keyword>
<keyword id="KW-0879">Wnt signaling pathway</keyword>
<sequence>MNRKARRCLGHLFLSLGMVYLRIGGFSSVVALGASIICNKIPGLAPRQRAICQSRPDAIIVIGEGSQMGLDECQFQFRNGRWNCSALGERTVFGKELKVGSREAAFTYAIIAAGVAHAITAACTQGNLSDCGCDKEKQGQYHRDEGWKWGGCSADIRYGIGFAKVFVDAREIKQNARTLMNLHNNEAGRKILEENMKLECKCHGVSGSCTTKTCWTTLPQFRELGYVLKDKYNEAVHVEPVRASRNKRPTFLKIKKPLSYRKPMDTDLVYIEKSPNYCEEDPVTGSVGTQGRACNKTAPQASGCDLMCCGRGYNTHQYARVWQCNCKFHWCCYVKCNTCSERTEMYTCK</sequence>